<feature type="chain" id="PRO_0000150106" description="DNA repair and recombination protein RadA">
    <location>
        <begin position="1"/>
        <end position="321"/>
    </location>
</feature>
<feature type="binding site" evidence="1">
    <location>
        <begin position="111"/>
        <end position="118"/>
    </location>
    <ligand>
        <name>ATP</name>
        <dbReference type="ChEBI" id="CHEBI:30616"/>
    </ligand>
</feature>
<evidence type="ECO:0000255" key="1">
    <source>
        <dbReference type="HAMAP-Rule" id="MF_00348"/>
    </source>
</evidence>
<keyword id="KW-0067">ATP-binding</keyword>
<keyword id="KW-0227">DNA damage</keyword>
<keyword id="KW-0233">DNA recombination</keyword>
<keyword id="KW-0238">DNA-binding</keyword>
<keyword id="KW-0547">Nucleotide-binding</keyword>
<keyword id="KW-1185">Reference proteome</keyword>
<dbReference type="EMBL" id="CP000077">
    <property type="protein sequence ID" value="AAY80094.1"/>
    <property type="molecule type" value="Genomic_DNA"/>
</dbReference>
<dbReference type="RefSeq" id="WP_011277596.1">
    <property type="nucleotide sequence ID" value="NC_007181.1"/>
</dbReference>
<dbReference type="SMR" id="Q4JAT5"/>
<dbReference type="STRING" id="330779.Saci_0715"/>
<dbReference type="GeneID" id="14551229"/>
<dbReference type="GeneID" id="78441057"/>
<dbReference type="KEGG" id="sai:Saci_0715"/>
<dbReference type="PATRIC" id="fig|330779.12.peg.682"/>
<dbReference type="eggNOG" id="arCOG00415">
    <property type="taxonomic scope" value="Archaea"/>
</dbReference>
<dbReference type="HOGENOM" id="CLU_041732_0_0_2"/>
<dbReference type="Proteomes" id="UP000001018">
    <property type="component" value="Chromosome"/>
</dbReference>
<dbReference type="GO" id="GO:0005524">
    <property type="term" value="F:ATP binding"/>
    <property type="evidence" value="ECO:0007669"/>
    <property type="project" value="UniProtKB-UniRule"/>
</dbReference>
<dbReference type="GO" id="GO:0016887">
    <property type="term" value="F:ATP hydrolysis activity"/>
    <property type="evidence" value="ECO:0007669"/>
    <property type="project" value="InterPro"/>
</dbReference>
<dbReference type="GO" id="GO:0140664">
    <property type="term" value="F:ATP-dependent DNA damage sensor activity"/>
    <property type="evidence" value="ECO:0007669"/>
    <property type="project" value="InterPro"/>
</dbReference>
<dbReference type="GO" id="GO:0003684">
    <property type="term" value="F:damaged DNA binding"/>
    <property type="evidence" value="ECO:0007669"/>
    <property type="project" value="UniProtKB-UniRule"/>
</dbReference>
<dbReference type="GO" id="GO:0006310">
    <property type="term" value="P:DNA recombination"/>
    <property type="evidence" value="ECO:0007669"/>
    <property type="project" value="UniProtKB-UniRule"/>
</dbReference>
<dbReference type="GO" id="GO:0006281">
    <property type="term" value="P:DNA repair"/>
    <property type="evidence" value="ECO:0007669"/>
    <property type="project" value="UniProtKB-UniRule"/>
</dbReference>
<dbReference type="CDD" id="cd19515">
    <property type="entry name" value="archRadA"/>
    <property type="match status" value="1"/>
</dbReference>
<dbReference type="FunFam" id="3.40.50.300:FF:002052">
    <property type="entry name" value="DNA repair protein RAD51 homolog"/>
    <property type="match status" value="1"/>
</dbReference>
<dbReference type="Gene3D" id="1.10.150.20">
    <property type="entry name" value="5' to 3' exonuclease, C-terminal subdomain"/>
    <property type="match status" value="1"/>
</dbReference>
<dbReference type="Gene3D" id="3.40.50.300">
    <property type="entry name" value="P-loop containing nucleotide triphosphate hydrolases"/>
    <property type="match status" value="1"/>
</dbReference>
<dbReference type="HAMAP" id="MF_00348">
    <property type="entry name" value="RadA_arch"/>
    <property type="match status" value="1"/>
</dbReference>
<dbReference type="InterPro" id="IPR003593">
    <property type="entry name" value="AAA+_ATPase"/>
</dbReference>
<dbReference type="InterPro" id="IPR013632">
    <property type="entry name" value="DNA_recomb/repair_Rad51_C"/>
</dbReference>
<dbReference type="InterPro" id="IPR011938">
    <property type="entry name" value="DNA_recomb/repair_RadA"/>
</dbReference>
<dbReference type="InterPro" id="IPR016467">
    <property type="entry name" value="DNA_recomb/repair_RecA-like"/>
</dbReference>
<dbReference type="InterPro" id="IPR010995">
    <property type="entry name" value="DNA_repair_Rad51/TF_NusA_a-hlx"/>
</dbReference>
<dbReference type="InterPro" id="IPR027417">
    <property type="entry name" value="P-loop_NTPase"/>
</dbReference>
<dbReference type="InterPro" id="IPR020588">
    <property type="entry name" value="RecA_ATP-bd"/>
</dbReference>
<dbReference type="InterPro" id="IPR020587">
    <property type="entry name" value="RecA_monomer-monomer_interface"/>
</dbReference>
<dbReference type="NCBIfam" id="NF003301">
    <property type="entry name" value="PRK04301.1"/>
    <property type="match status" value="1"/>
</dbReference>
<dbReference type="NCBIfam" id="TIGR02236">
    <property type="entry name" value="recomb_radA"/>
    <property type="match status" value="1"/>
</dbReference>
<dbReference type="PANTHER" id="PTHR22942:SF30">
    <property type="entry name" value="MEIOTIC RECOMBINATION PROTEIN DMC1_LIM15 HOMOLOG"/>
    <property type="match status" value="1"/>
</dbReference>
<dbReference type="PANTHER" id="PTHR22942">
    <property type="entry name" value="RECA/RAD51/RADA DNA STRAND-PAIRING FAMILY MEMBER"/>
    <property type="match status" value="1"/>
</dbReference>
<dbReference type="Pfam" id="PF14520">
    <property type="entry name" value="HHH_5"/>
    <property type="match status" value="1"/>
</dbReference>
<dbReference type="Pfam" id="PF08423">
    <property type="entry name" value="Rad51"/>
    <property type="match status" value="1"/>
</dbReference>
<dbReference type="PIRSF" id="PIRSF005856">
    <property type="entry name" value="Rad51"/>
    <property type="match status" value="1"/>
</dbReference>
<dbReference type="SMART" id="SM00382">
    <property type="entry name" value="AAA"/>
    <property type="match status" value="1"/>
</dbReference>
<dbReference type="SUPFAM" id="SSF52540">
    <property type="entry name" value="P-loop containing nucleoside triphosphate hydrolases"/>
    <property type="match status" value="1"/>
</dbReference>
<dbReference type="SUPFAM" id="SSF47794">
    <property type="entry name" value="Rad51 N-terminal domain-like"/>
    <property type="match status" value="1"/>
</dbReference>
<dbReference type="PROSITE" id="PS50162">
    <property type="entry name" value="RECA_2"/>
    <property type="match status" value="1"/>
</dbReference>
<dbReference type="PROSITE" id="PS50163">
    <property type="entry name" value="RECA_3"/>
    <property type="match status" value="1"/>
</dbReference>
<reference key="1">
    <citation type="journal article" date="2005" name="J. Bacteriol.">
        <title>The genome of Sulfolobus acidocaldarius, a model organism of the Crenarchaeota.</title>
        <authorList>
            <person name="Chen L."/>
            <person name="Bruegger K."/>
            <person name="Skovgaard M."/>
            <person name="Redder P."/>
            <person name="She Q."/>
            <person name="Torarinsson E."/>
            <person name="Greve B."/>
            <person name="Awayez M."/>
            <person name="Zibat A."/>
            <person name="Klenk H.-P."/>
            <person name="Garrett R.A."/>
        </authorList>
    </citation>
    <scope>NUCLEOTIDE SEQUENCE [LARGE SCALE GENOMIC DNA]</scope>
    <source>
        <strain>ATCC 33909 / DSM 639 / JCM 8929 / NBRC 15157 / NCIMB 11770</strain>
    </source>
</reference>
<comment type="function">
    <text evidence="1">Involved in DNA repair and in homologous recombination. Binds and assemble on single-stranded DNA to form a nucleoprotein filament. Hydrolyzes ATP in a ssDNA-dependent manner and promotes DNA strand exchange between homologous DNA molecules.</text>
</comment>
<comment type="similarity">
    <text evidence="1">Belongs to the eukaryotic RecA-like protein family.</text>
</comment>
<protein>
    <recommendedName>
        <fullName evidence="1">DNA repair and recombination protein RadA</fullName>
    </recommendedName>
</protein>
<accession>Q4JAT5</accession>
<gene>
    <name evidence="1" type="primary">radA</name>
    <name type="ordered locus">Saci_0715</name>
</gene>
<organism>
    <name type="scientific">Sulfolobus acidocaldarius (strain ATCC 33909 / DSM 639 / JCM 8929 / NBRC 15157 / NCIMB 11770)</name>
    <dbReference type="NCBI Taxonomy" id="330779"/>
    <lineage>
        <taxon>Archaea</taxon>
        <taxon>Thermoproteota</taxon>
        <taxon>Thermoprotei</taxon>
        <taxon>Sulfolobales</taxon>
        <taxon>Sulfolobaceae</taxon>
        <taxon>Sulfolobus</taxon>
    </lineage>
</organism>
<proteinExistence type="inferred from homology"/>
<sequence length="321" mass="35343">MSNDGKKVKSLSDLSGVGQNILNKLVEAGYSSLEAVAVATPQDLSVAAGIPQTTAQRIIKEAREALDIRFKTALEVKKERMNTKKITTGSQALDGLLGGGIETRTMTEFFGEFGSGKTQLCHQISISVQLPQEKGGLNGKAVYIDTEGTFRWERIEAMAKGAGLESDIAMNNIYYMRAINSDHQMAIVDDLQELITKDPAIKLIIVDSITSHFRAEYPGRENLAVRQQKLNKHLHQLVRLAEMYDIAVIITNQVMARPDMFYGDPTTAVGGHTLYHVPGIRVQLKKSRGNKRIARIVDAPHLPEGEVVFAITEEGVRDAEE</sequence>
<name>RADA_SULAC</name>